<gene>
    <name evidence="1" type="primary">murA</name>
    <name type="ordered locus">SARI_04318</name>
</gene>
<comment type="function">
    <text evidence="1">Cell wall formation. Adds enolpyruvyl to UDP-N-acetylglucosamine.</text>
</comment>
<comment type="catalytic activity">
    <reaction evidence="1">
        <text>phosphoenolpyruvate + UDP-N-acetyl-alpha-D-glucosamine = UDP-N-acetyl-3-O-(1-carboxyvinyl)-alpha-D-glucosamine + phosphate</text>
        <dbReference type="Rhea" id="RHEA:18681"/>
        <dbReference type="ChEBI" id="CHEBI:43474"/>
        <dbReference type="ChEBI" id="CHEBI:57705"/>
        <dbReference type="ChEBI" id="CHEBI:58702"/>
        <dbReference type="ChEBI" id="CHEBI:68483"/>
        <dbReference type="EC" id="2.5.1.7"/>
    </reaction>
</comment>
<comment type="pathway">
    <text evidence="1">Cell wall biogenesis; peptidoglycan biosynthesis.</text>
</comment>
<comment type="subcellular location">
    <subcellularLocation>
        <location evidence="1">Cytoplasm</location>
    </subcellularLocation>
</comment>
<comment type="similarity">
    <text evidence="1">Belongs to the EPSP synthase family. MurA subfamily.</text>
</comment>
<organism>
    <name type="scientific">Salmonella arizonae (strain ATCC BAA-731 / CDC346-86 / RSK2980)</name>
    <dbReference type="NCBI Taxonomy" id="41514"/>
    <lineage>
        <taxon>Bacteria</taxon>
        <taxon>Pseudomonadati</taxon>
        <taxon>Pseudomonadota</taxon>
        <taxon>Gammaproteobacteria</taxon>
        <taxon>Enterobacterales</taxon>
        <taxon>Enterobacteriaceae</taxon>
        <taxon>Salmonella</taxon>
    </lineage>
</organism>
<protein>
    <recommendedName>
        <fullName evidence="1">UDP-N-acetylglucosamine 1-carboxyvinyltransferase</fullName>
        <ecNumber evidence="1">2.5.1.7</ecNumber>
    </recommendedName>
    <alternativeName>
        <fullName evidence="1">Enoylpyruvate transferase</fullName>
    </alternativeName>
    <alternativeName>
        <fullName evidence="1">UDP-N-acetylglucosamine enolpyruvyl transferase</fullName>
        <shortName evidence="1">EPT</shortName>
    </alternativeName>
</protein>
<proteinExistence type="inferred from homology"/>
<name>MURA_SALAR</name>
<dbReference type="EC" id="2.5.1.7" evidence="1"/>
<dbReference type="EMBL" id="CP000880">
    <property type="protein sequence ID" value="ABX24100.1"/>
    <property type="molecule type" value="Genomic_DNA"/>
</dbReference>
<dbReference type="SMR" id="A9MP18"/>
<dbReference type="STRING" id="41514.SARI_04318"/>
<dbReference type="KEGG" id="ses:SARI_04318"/>
<dbReference type="HOGENOM" id="CLU_027387_0_0_6"/>
<dbReference type="UniPathway" id="UPA00219"/>
<dbReference type="Proteomes" id="UP000002084">
    <property type="component" value="Chromosome"/>
</dbReference>
<dbReference type="GO" id="GO:0005737">
    <property type="term" value="C:cytoplasm"/>
    <property type="evidence" value="ECO:0007669"/>
    <property type="project" value="UniProtKB-SubCell"/>
</dbReference>
<dbReference type="GO" id="GO:0008760">
    <property type="term" value="F:UDP-N-acetylglucosamine 1-carboxyvinyltransferase activity"/>
    <property type="evidence" value="ECO:0007669"/>
    <property type="project" value="UniProtKB-UniRule"/>
</dbReference>
<dbReference type="GO" id="GO:0051301">
    <property type="term" value="P:cell division"/>
    <property type="evidence" value="ECO:0007669"/>
    <property type="project" value="UniProtKB-KW"/>
</dbReference>
<dbReference type="GO" id="GO:0071555">
    <property type="term" value="P:cell wall organization"/>
    <property type="evidence" value="ECO:0007669"/>
    <property type="project" value="UniProtKB-KW"/>
</dbReference>
<dbReference type="GO" id="GO:0009252">
    <property type="term" value="P:peptidoglycan biosynthetic process"/>
    <property type="evidence" value="ECO:0007669"/>
    <property type="project" value="UniProtKB-UniRule"/>
</dbReference>
<dbReference type="GO" id="GO:0008360">
    <property type="term" value="P:regulation of cell shape"/>
    <property type="evidence" value="ECO:0007669"/>
    <property type="project" value="UniProtKB-KW"/>
</dbReference>
<dbReference type="GO" id="GO:0019277">
    <property type="term" value="P:UDP-N-acetylgalactosamine biosynthetic process"/>
    <property type="evidence" value="ECO:0007669"/>
    <property type="project" value="InterPro"/>
</dbReference>
<dbReference type="CDD" id="cd01555">
    <property type="entry name" value="UdpNAET"/>
    <property type="match status" value="1"/>
</dbReference>
<dbReference type="FunFam" id="3.65.10.10:FF:000002">
    <property type="entry name" value="UDP-N-acetylglucosamine 1-carboxyvinyltransferase"/>
    <property type="match status" value="1"/>
</dbReference>
<dbReference type="Gene3D" id="3.65.10.10">
    <property type="entry name" value="Enolpyruvate transferase domain"/>
    <property type="match status" value="2"/>
</dbReference>
<dbReference type="HAMAP" id="MF_00111">
    <property type="entry name" value="MurA"/>
    <property type="match status" value="1"/>
</dbReference>
<dbReference type="InterPro" id="IPR001986">
    <property type="entry name" value="Enolpyruvate_Tfrase_dom"/>
</dbReference>
<dbReference type="InterPro" id="IPR036968">
    <property type="entry name" value="Enolpyruvate_Tfrase_sf"/>
</dbReference>
<dbReference type="InterPro" id="IPR050068">
    <property type="entry name" value="MurA_subfamily"/>
</dbReference>
<dbReference type="InterPro" id="IPR013792">
    <property type="entry name" value="RNA3'P_cycl/enolpyr_Trfase_a/b"/>
</dbReference>
<dbReference type="InterPro" id="IPR005750">
    <property type="entry name" value="UDP_GlcNAc_COvinyl_MurA"/>
</dbReference>
<dbReference type="NCBIfam" id="TIGR01072">
    <property type="entry name" value="murA"/>
    <property type="match status" value="1"/>
</dbReference>
<dbReference type="NCBIfam" id="NF006873">
    <property type="entry name" value="PRK09369.1"/>
    <property type="match status" value="1"/>
</dbReference>
<dbReference type="PANTHER" id="PTHR43783">
    <property type="entry name" value="UDP-N-ACETYLGLUCOSAMINE 1-CARBOXYVINYLTRANSFERASE"/>
    <property type="match status" value="1"/>
</dbReference>
<dbReference type="PANTHER" id="PTHR43783:SF1">
    <property type="entry name" value="UDP-N-ACETYLGLUCOSAMINE 1-CARBOXYVINYLTRANSFERASE"/>
    <property type="match status" value="1"/>
</dbReference>
<dbReference type="Pfam" id="PF00275">
    <property type="entry name" value="EPSP_synthase"/>
    <property type="match status" value="1"/>
</dbReference>
<dbReference type="SUPFAM" id="SSF55205">
    <property type="entry name" value="EPT/RTPC-like"/>
    <property type="match status" value="1"/>
</dbReference>
<sequence>MDKFRVQGPTTLQGEVTISGAKNAALPILFAALLAEEPVEIQNVPKLKDVDTSMKLLSQLGAKVERNGSVHIDASQVNVFCAPYDLVKTMRASIWALGPLVARFGQGQVSLPGGCTIGARPVDLHITGLEQLGATIKLEEGYVKASVDGRLKGAHIVMDKVSVGATVTIMCAATLAEGTTIIENAAREPEIVDTANFLVALGAKISGQGTDRITIEGVEHLGGGIYRVLPDRIETGTFLVAAAISRGKIICRNAQPDTLDAVLAKLRDAGADIEVGEDWISLDMHGKRPKAVNVRTAPHPAFPTDMQAQFTLLNLVAEGTGFITETVFENRFMHVPELSRMGARAEIESNTVICHGVETLSGAQVMATDLRASASLVLAGCIAEGTTVVDRIYHIDRGYERIEDKLRALGAHIERVKGE</sequence>
<evidence type="ECO:0000255" key="1">
    <source>
        <dbReference type="HAMAP-Rule" id="MF_00111"/>
    </source>
</evidence>
<accession>A9MP18</accession>
<keyword id="KW-0131">Cell cycle</keyword>
<keyword id="KW-0132">Cell division</keyword>
<keyword id="KW-0133">Cell shape</keyword>
<keyword id="KW-0961">Cell wall biogenesis/degradation</keyword>
<keyword id="KW-0963">Cytoplasm</keyword>
<keyword id="KW-0573">Peptidoglycan synthesis</keyword>
<keyword id="KW-0670">Pyruvate</keyword>
<keyword id="KW-1185">Reference proteome</keyword>
<keyword id="KW-0808">Transferase</keyword>
<reference key="1">
    <citation type="submission" date="2007-11" db="EMBL/GenBank/DDBJ databases">
        <authorList>
            <consortium name="The Salmonella enterica serovar Arizonae Genome Sequencing Project"/>
            <person name="McClelland M."/>
            <person name="Sanderson E.K."/>
            <person name="Porwollik S."/>
            <person name="Spieth J."/>
            <person name="Clifton W.S."/>
            <person name="Fulton R."/>
            <person name="Chunyan W."/>
            <person name="Wollam A."/>
            <person name="Shah N."/>
            <person name="Pepin K."/>
            <person name="Bhonagiri V."/>
            <person name="Nash W."/>
            <person name="Johnson M."/>
            <person name="Thiruvilangam P."/>
            <person name="Wilson R."/>
        </authorList>
    </citation>
    <scope>NUCLEOTIDE SEQUENCE [LARGE SCALE GENOMIC DNA]</scope>
    <source>
        <strain>ATCC BAA-731 / CDC346-86 / RSK2980</strain>
    </source>
</reference>
<feature type="chain" id="PRO_1000075980" description="UDP-N-acetylglucosamine 1-carboxyvinyltransferase">
    <location>
        <begin position="1"/>
        <end position="419"/>
    </location>
</feature>
<feature type="active site" description="Proton donor" evidence="1">
    <location>
        <position position="115"/>
    </location>
</feature>
<feature type="binding site" evidence="1">
    <location>
        <begin position="22"/>
        <end position="23"/>
    </location>
    <ligand>
        <name>phosphoenolpyruvate</name>
        <dbReference type="ChEBI" id="CHEBI:58702"/>
    </ligand>
</feature>
<feature type="binding site" evidence="1">
    <location>
        <position position="91"/>
    </location>
    <ligand>
        <name>UDP-N-acetyl-alpha-D-glucosamine</name>
        <dbReference type="ChEBI" id="CHEBI:57705"/>
    </ligand>
</feature>
<feature type="binding site" evidence="1">
    <location>
        <begin position="120"/>
        <end position="124"/>
    </location>
    <ligand>
        <name>UDP-N-acetyl-alpha-D-glucosamine</name>
        <dbReference type="ChEBI" id="CHEBI:57705"/>
    </ligand>
</feature>
<feature type="binding site" evidence="1">
    <location>
        <begin position="160"/>
        <end position="163"/>
    </location>
    <ligand>
        <name>UDP-N-acetyl-alpha-D-glucosamine</name>
        <dbReference type="ChEBI" id="CHEBI:57705"/>
    </ligand>
</feature>
<feature type="binding site" evidence="1">
    <location>
        <position position="305"/>
    </location>
    <ligand>
        <name>UDP-N-acetyl-alpha-D-glucosamine</name>
        <dbReference type="ChEBI" id="CHEBI:57705"/>
    </ligand>
</feature>
<feature type="binding site" evidence="1">
    <location>
        <position position="327"/>
    </location>
    <ligand>
        <name>UDP-N-acetyl-alpha-D-glucosamine</name>
        <dbReference type="ChEBI" id="CHEBI:57705"/>
    </ligand>
</feature>
<feature type="modified residue" description="2-(S-cysteinyl)pyruvic acid O-phosphothioketal" evidence="1">
    <location>
        <position position="115"/>
    </location>
</feature>